<feature type="chain" id="PRO_0000141386" description="Aspartate-semialdehyde dehydrogenase">
    <location>
        <begin position="1"/>
        <end position="343"/>
    </location>
</feature>
<feature type="active site" description="Acyl-thioester intermediate" evidence="1">
    <location>
        <position position="137"/>
    </location>
</feature>
<feature type="active site" description="Proton acceptor" evidence="1">
    <location>
        <position position="250"/>
    </location>
</feature>
<feature type="binding site" evidence="1">
    <location>
        <begin position="20"/>
        <end position="23"/>
    </location>
    <ligand>
        <name>NADP(+)</name>
        <dbReference type="ChEBI" id="CHEBI:58349"/>
    </ligand>
</feature>
<feature type="binding site" evidence="1">
    <location>
        <begin position="48"/>
        <end position="49"/>
    </location>
    <ligand>
        <name>NADP(+)</name>
        <dbReference type="ChEBI" id="CHEBI:58349"/>
    </ligand>
</feature>
<feature type="binding site" evidence="1">
    <location>
        <position position="108"/>
    </location>
    <ligand>
        <name>phosphate</name>
        <dbReference type="ChEBI" id="CHEBI:43474"/>
    </ligand>
</feature>
<feature type="binding site" evidence="1">
    <location>
        <position position="164"/>
    </location>
    <ligand>
        <name>substrate</name>
    </ligand>
</feature>
<feature type="binding site" evidence="1">
    <location>
        <begin position="167"/>
        <end position="168"/>
    </location>
    <ligand>
        <name>NADP(+)</name>
        <dbReference type="ChEBI" id="CHEBI:58349"/>
    </ligand>
</feature>
<feature type="binding site" evidence="1">
    <location>
        <position position="221"/>
    </location>
    <ligand>
        <name>phosphate</name>
        <dbReference type="ChEBI" id="CHEBI:43474"/>
    </ligand>
</feature>
<feature type="binding site" evidence="1">
    <location>
        <position position="243"/>
    </location>
    <ligand>
        <name>substrate</name>
    </ligand>
</feature>
<feature type="binding site" evidence="1">
    <location>
        <position position="323"/>
    </location>
    <ligand>
        <name>NADP(+)</name>
        <dbReference type="ChEBI" id="CHEBI:58349"/>
    </ligand>
</feature>
<feature type="sequence conflict" description="In Ref. 2; CAA92210." evidence="2" ref="2">
    <original>T</original>
    <variation>P</variation>
    <location>
        <position position="238"/>
    </location>
</feature>
<feature type="sequence conflict" description="In Ref. 2; CAA92210." evidence="2" ref="2">
    <original>VPV</original>
    <variation>GPA</variation>
    <location>
        <begin position="244"/>
        <end position="246"/>
    </location>
</feature>
<feature type="sequence conflict" description="In Ref. 2; CAA92210." evidence="2" ref="2">
    <original>SI</original>
    <variation>AT</variation>
    <location>
        <begin position="253"/>
        <end position="254"/>
    </location>
</feature>
<feature type="sequence conflict" description="In Ref. 2; CAA92210." evidence="2" ref="2">
    <original>EFAE</original>
    <variation>VFSG</variation>
    <location>
        <begin position="257"/>
        <end position="260"/>
    </location>
</feature>
<feature type="sequence conflict" description="In Ref. 2; CAA92210." evidence="2" ref="2">
    <original>KI</original>
    <variation>QN</variation>
    <location>
        <begin position="269"/>
        <end position="270"/>
    </location>
</feature>
<feature type="sequence conflict" description="In Ref. 2; CAA92210." evidence="2" ref="2">
    <original>N</original>
    <variation>D</variation>
    <location>
        <position position="286"/>
    </location>
</feature>
<feature type="sequence conflict" description="In Ref. 2; CAA92210." evidence="2" ref="2">
    <original>K</original>
    <variation>Q</variation>
    <location>
        <position position="297"/>
    </location>
</feature>
<feature type="sequence conflict" description="In Ref. 2; CAA92210." evidence="2" ref="2">
    <original>I</original>
    <variation>K</variation>
    <location>
        <position position="305"/>
    </location>
</feature>
<feature type="sequence conflict" description="In Ref. 2; CAA92210." evidence="2" ref="2">
    <original>I</original>
    <variation>K</variation>
    <location>
        <position position="324"/>
    </location>
</feature>
<evidence type="ECO:0000255" key="1">
    <source>
        <dbReference type="HAMAP-Rule" id="MF_02121"/>
    </source>
</evidence>
<evidence type="ECO:0000305" key="2"/>
<comment type="function">
    <text evidence="1">Catalyzes the NADPH-dependent formation of L-aspartate-semialdehyde (L-ASA) by the reductive dephosphorylation of L-aspartyl-4-phosphate.</text>
</comment>
<comment type="catalytic activity">
    <reaction evidence="1">
        <text>L-aspartate 4-semialdehyde + phosphate + NADP(+) = 4-phospho-L-aspartate + NADPH + H(+)</text>
        <dbReference type="Rhea" id="RHEA:24284"/>
        <dbReference type="ChEBI" id="CHEBI:15378"/>
        <dbReference type="ChEBI" id="CHEBI:43474"/>
        <dbReference type="ChEBI" id="CHEBI:57535"/>
        <dbReference type="ChEBI" id="CHEBI:57783"/>
        <dbReference type="ChEBI" id="CHEBI:58349"/>
        <dbReference type="ChEBI" id="CHEBI:537519"/>
        <dbReference type="EC" id="1.2.1.11"/>
    </reaction>
</comment>
<comment type="pathway">
    <text evidence="1">Amino-acid biosynthesis; L-lysine biosynthesis via DAP pathway; (S)-tetrahydrodipicolinate from L-aspartate: step 2/4.</text>
</comment>
<comment type="pathway">
    <text evidence="1">Amino-acid biosynthesis; L-methionine biosynthesis via de novo pathway; L-homoserine from L-aspartate: step 2/3.</text>
</comment>
<comment type="pathway">
    <text evidence="1">Amino-acid biosynthesis; L-threonine biosynthesis; L-threonine from L-aspartate: step 2/5.</text>
</comment>
<comment type="subunit">
    <text evidence="1">Homodimer.</text>
</comment>
<comment type="similarity">
    <text evidence="1">Belongs to the aspartate-semialdehyde dehydrogenase family.</text>
</comment>
<organism>
    <name type="scientific">Prochlorococcus marinus (strain SARG / CCMP1375 / SS120)</name>
    <dbReference type="NCBI Taxonomy" id="167539"/>
    <lineage>
        <taxon>Bacteria</taxon>
        <taxon>Bacillati</taxon>
        <taxon>Cyanobacteriota</taxon>
        <taxon>Cyanophyceae</taxon>
        <taxon>Synechococcales</taxon>
        <taxon>Prochlorococcaceae</taxon>
        <taxon>Prochlorococcus</taxon>
    </lineage>
</organism>
<dbReference type="EC" id="1.2.1.11" evidence="1"/>
<dbReference type="EMBL" id="AE017126">
    <property type="protein sequence ID" value="AAQ00858.1"/>
    <property type="molecule type" value="Genomic_DNA"/>
</dbReference>
<dbReference type="EMBL" id="Z68126">
    <property type="protein sequence ID" value="CAA92210.1"/>
    <property type="molecule type" value="Genomic_DNA"/>
</dbReference>
<dbReference type="RefSeq" id="NP_876205.1">
    <property type="nucleotide sequence ID" value="NC_005042.1"/>
</dbReference>
<dbReference type="RefSeq" id="WP_011125963.1">
    <property type="nucleotide sequence ID" value="NC_005042.1"/>
</dbReference>
<dbReference type="SMR" id="P49420"/>
<dbReference type="STRING" id="167539.Pro_1814"/>
<dbReference type="EnsemblBacteria" id="AAQ00858">
    <property type="protein sequence ID" value="AAQ00858"/>
    <property type="gene ID" value="Pro_1814"/>
</dbReference>
<dbReference type="KEGG" id="pma:Pro_1814"/>
<dbReference type="PATRIC" id="fig|167539.5.peg.1916"/>
<dbReference type="eggNOG" id="COG0136">
    <property type="taxonomic scope" value="Bacteria"/>
</dbReference>
<dbReference type="HOGENOM" id="CLU_049966_0_1_3"/>
<dbReference type="OrthoDB" id="9805684at2"/>
<dbReference type="UniPathway" id="UPA00034">
    <property type="reaction ID" value="UER00016"/>
</dbReference>
<dbReference type="UniPathway" id="UPA00050">
    <property type="reaction ID" value="UER00463"/>
</dbReference>
<dbReference type="UniPathway" id="UPA00051">
    <property type="reaction ID" value="UER00464"/>
</dbReference>
<dbReference type="Proteomes" id="UP000001420">
    <property type="component" value="Chromosome"/>
</dbReference>
<dbReference type="GO" id="GO:0004073">
    <property type="term" value="F:aspartate-semialdehyde dehydrogenase activity"/>
    <property type="evidence" value="ECO:0007669"/>
    <property type="project" value="UniProtKB-UniRule"/>
</dbReference>
<dbReference type="GO" id="GO:0051287">
    <property type="term" value="F:NAD binding"/>
    <property type="evidence" value="ECO:0007669"/>
    <property type="project" value="InterPro"/>
</dbReference>
<dbReference type="GO" id="GO:0050661">
    <property type="term" value="F:NADP binding"/>
    <property type="evidence" value="ECO:0007669"/>
    <property type="project" value="UniProtKB-UniRule"/>
</dbReference>
<dbReference type="GO" id="GO:0046983">
    <property type="term" value="F:protein dimerization activity"/>
    <property type="evidence" value="ECO:0007669"/>
    <property type="project" value="InterPro"/>
</dbReference>
<dbReference type="GO" id="GO:0071266">
    <property type="term" value="P:'de novo' L-methionine biosynthetic process"/>
    <property type="evidence" value="ECO:0007669"/>
    <property type="project" value="UniProtKB-UniRule"/>
</dbReference>
<dbReference type="GO" id="GO:0019877">
    <property type="term" value="P:diaminopimelate biosynthetic process"/>
    <property type="evidence" value="ECO:0007669"/>
    <property type="project" value="UniProtKB-UniRule"/>
</dbReference>
<dbReference type="GO" id="GO:0009097">
    <property type="term" value="P:isoleucine biosynthetic process"/>
    <property type="evidence" value="ECO:0007669"/>
    <property type="project" value="InterPro"/>
</dbReference>
<dbReference type="GO" id="GO:0009089">
    <property type="term" value="P:lysine biosynthetic process via diaminopimelate"/>
    <property type="evidence" value="ECO:0007669"/>
    <property type="project" value="UniProtKB-UniRule"/>
</dbReference>
<dbReference type="GO" id="GO:0009088">
    <property type="term" value="P:threonine biosynthetic process"/>
    <property type="evidence" value="ECO:0007669"/>
    <property type="project" value="UniProtKB-UniRule"/>
</dbReference>
<dbReference type="CDD" id="cd18131">
    <property type="entry name" value="ASADH_C_bac_euk_like"/>
    <property type="match status" value="1"/>
</dbReference>
<dbReference type="CDD" id="cd02316">
    <property type="entry name" value="VcASADH2_like_N"/>
    <property type="match status" value="1"/>
</dbReference>
<dbReference type="Gene3D" id="3.30.360.10">
    <property type="entry name" value="Dihydrodipicolinate Reductase, domain 2"/>
    <property type="match status" value="1"/>
</dbReference>
<dbReference type="Gene3D" id="3.40.50.720">
    <property type="entry name" value="NAD(P)-binding Rossmann-like Domain"/>
    <property type="match status" value="1"/>
</dbReference>
<dbReference type="HAMAP" id="MF_02121">
    <property type="entry name" value="ASADH"/>
    <property type="match status" value="1"/>
</dbReference>
<dbReference type="InterPro" id="IPR012080">
    <property type="entry name" value="Asp_semialdehyde_DH"/>
</dbReference>
<dbReference type="InterPro" id="IPR005986">
    <property type="entry name" value="Asp_semialdehyde_DH_beta"/>
</dbReference>
<dbReference type="InterPro" id="IPR036291">
    <property type="entry name" value="NAD(P)-bd_dom_sf"/>
</dbReference>
<dbReference type="InterPro" id="IPR000534">
    <property type="entry name" value="Semialdehyde_DH_NAD-bd"/>
</dbReference>
<dbReference type="InterPro" id="IPR012280">
    <property type="entry name" value="Semialdhyde_DH_dimer_dom"/>
</dbReference>
<dbReference type="NCBIfam" id="TIGR01296">
    <property type="entry name" value="asd_B"/>
    <property type="match status" value="1"/>
</dbReference>
<dbReference type="NCBIfam" id="NF011456">
    <property type="entry name" value="PRK14874.1"/>
    <property type="match status" value="1"/>
</dbReference>
<dbReference type="PANTHER" id="PTHR46278:SF2">
    <property type="entry name" value="ASPARTATE-SEMIALDEHYDE DEHYDROGENASE"/>
    <property type="match status" value="1"/>
</dbReference>
<dbReference type="PANTHER" id="PTHR46278">
    <property type="entry name" value="DEHYDROGENASE, PUTATIVE-RELATED"/>
    <property type="match status" value="1"/>
</dbReference>
<dbReference type="Pfam" id="PF01118">
    <property type="entry name" value="Semialdhyde_dh"/>
    <property type="match status" value="1"/>
</dbReference>
<dbReference type="Pfam" id="PF02774">
    <property type="entry name" value="Semialdhyde_dhC"/>
    <property type="match status" value="1"/>
</dbReference>
<dbReference type="PIRSF" id="PIRSF000148">
    <property type="entry name" value="ASA_dh"/>
    <property type="match status" value="1"/>
</dbReference>
<dbReference type="SMART" id="SM00859">
    <property type="entry name" value="Semialdhyde_dh"/>
    <property type="match status" value="1"/>
</dbReference>
<dbReference type="SUPFAM" id="SSF55347">
    <property type="entry name" value="Glyceraldehyde-3-phosphate dehydrogenase-like, C-terminal domain"/>
    <property type="match status" value="1"/>
</dbReference>
<dbReference type="SUPFAM" id="SSF51735">
    <property type="entry name" value="NAD(P)-binding Rossmann-fold domains"/>
    <property type="match status" value="1"/>
</dbReference>
<protein>
    <recommendedName>
        <fullName evidence="1">Aspartate-semialdehyde dehydrogenase</fullName>
        <shortName evidence="1">ASA dehydrogenase</shortName>
        <shortName evidence="1">ASADH</shortName>
        <ecNumber evidence="1">1.2.1.11</ecNumber>
    </recommendedName>
    <alternativeName>
        <fullName evidence="1">Aspartate-beta-semialdehyde dehydrogenase</fullName>
    </alternativeName>
</protein>
<keyword id="KW-0028">Amino-acid biosynthesis</keyword>
<keyword id="KW-0220">Diaminopimelate biosynthesis</keyword>
<keyword id="KW-0457">Lysine biosynthesis</keyword>
<keyword id="KW-0486">Methionine biosynthesis</keyword>
<keyword id="KW-0521">NADP</keyword>
<keyword id="KW-0560">Oxidoreductase</keyword>
<keyword id="KW-1185">Reference proteome</keyword>
<keyword id="KW-0791">Threonine biosynthesis</keyword>
<sequence>MTLQKPFPDRPLTLAVLGSSGAVGAEILKILEERSFPIRELRLLASERSAGQVQFFKGEDLVVKKVSPEGFEDVDLVLASAGGSISRKWRKVINSAGAVIVDNSNAYRMEPDVPLVVPEVNPSQVFTHKGLIANPNCTTILLALVLAPLSAQLPIKRVVVSTYQSASGAGARAMNELKQLSQDVLNGNIPKSEILPYSLAFNLFLHNSPLQSNNYCEEEMKMINETRKILNQSELAITATCVRVPVLRAHSESINIEFAEPFPVEEARKILSNASGIKLLEDIQMNRFPMPIDVTGKDDIAVGRIRQDLSNPKALELWLCGDQIRKGAALNAIQIAELLLTRS</sequence>
<accession>P49420</accession>
<proteinExistence type="inferred from homology"/>
<name>DHAS_PROMA</name>
<gene>
    <name evidence="1" type="primary">asd</name>
    <name type="ordered locus">Pro_1814</name>
</gene>
<reference key="1">
    <citation type="journal article" date="2003" name="Proc. Natl. Acad. Sci. U.S.A.">
        <title>Genome sequence of the cyanobacterium Prochlorococcus marinus SS120, a nearly minimal oxyphototrophic genome.</title>
        <authorList>
            <person name="Dufresne A."/>
            <person name="Salanoubat M."/>
            <person name="Partensky F."/>
            <person name="Artiguenave F."/>
            <person name="Axmann I.M."/>
            <person name="Barbe V."/>
            <person name="Duprat S."/>
            <person name="Galperin M.Y."/>
            <person name="Koonin E.V."/>
            <person name="Le Gall F."/>
            <person name="Makarova K.S."/>
            <person name="Ostrowski M."/>
            <person name="Oztas S."/>
            <person name="Robert C."/>
            <person name="Rogozin I.B."/>
            <person name="Scanlan D.J."/>
            <person name="Tandeau de Marsac N."/>
            <person name="Weissenbach J."/>
            <person name="Wincker P."/>
            <person name="Wolf Y.I."/>
            <person name="Hess W.R."/>
        </authorList>
    </citation>
    <scope>NUCLEOTIDE SEQUENCE [LARGE SCALE GENOMIC DNA]</scope>
    <source>
        <strain>SARG / CCMP1375 / SS120</strain>
    </source>
</reference>
<reference key="2">
    <citation type="journal article" date="1995" name="Endocyt. Cell Res.">
        <title>Molecular cloning and characterization of a dihydrodipicolinate synthase (DHDPS) gene from the photoautotrophic prokaryote Prochlorococcus marinus CCMP 1375 (Prochlorophyta).</title>
        <authorList>
            <person name="Lorenz M."/>
            <person name="Boerner T."/>
            <person name="Hess W.R."/>
        </authorList>
    </citation>
    <scope>NUCLEOTIDE SEQUENCE [GENOMIC DNA] OF 238-343</scope>
    <source>
        <strain>SARG / CCMP1375 / SS120</strain>
    </source>
</reference>